<sequence length="111" mass="13083">MGKRIDDETLKKIRLPKEGEIFGVVEKMLGNDRVQVRCVDGKTRVARIPGKMRKRVWIREGDVVLVKPWEFQPERADVTWRYTRVQVDWLKRKGKLDERVTKLLEEIIPGA</sequence>
<comment type="function">
    <text evidence="1">Seems to be required for maximal rate of protein biosynthesis. Enhances ribosome dissociation into subunits and stabilizes the binding of the initiator Met-tRNA(I) to 40 S ribosomal subunits.</text>
</comment>
<comment type="similarity">
    <text evidence="1">Belongs to the eIF-1A family.</text>
</comment>
<protein>
    <recommendedName>
        <fullName evidence="1">Translation initiation factor 1A</fullName>
        <shortName evidence="1">aIF-1A</shortName>
    </recommendedName>
</protein>
<evidence type="ECO:0000255" key="1">
    <source>
        <dbReference type="HAMAP-Rule" id="MF_00216"/>
    </source>
</evidence>
<name>IF1A_METKA</name>
<gene>
    <name type="primary">eIF1A</name>
    <name type="ordered locus">MK0515</name>
</gene>
<keyword id="KW-0396">Initiation factor</keyword>
<keyword id="KW-0648">Protein biosynthesis</keyword>
<keyword id="KW-1185">Reference proteome</keyword>
<reference key="1">
    <citation type="journal article" date="2002" name="Proc. Natl. Acad. Sci. U.S.A.">
        <title>The complete genome of hyperthermophile Methanopyrus kandleri AV19 and monophyly of archaeal methanogens.</title>
        <authorList>
            <person name="Slesarev A.I."/>
            <person name="Mezhevaya K.V."/>
            <person name="Makarova K.S."/>
            <person name="Polushin N.N."/>
            <person name="Shcherbinina O.V."/>
            <person name="Shakhova V.V."/>
            <person name="Belova G.I."/>
            <person name="Aravind L."/>
            <person name="Natale D.A."/>
            <person name="Rogozin I.B."/>
            <person name="Tatusov R.L."/>
            <person name="Wolf Y.I."/>
            <person name="Stetter K.O."/>
            <person name="Malykh A.G."/>
            <person name="Koonin E.V."/>
            <person name="Kozyavkin S.A."/>
        </authorList>
    </citation>
    <scope>NUCLEOTIDE SEQUENCE [LARGE SCALE GENOMIC DNA]</scope>
    <source>
        <strain>AV19 / DSM 6324 / JCM 9639 / NBRC 100938</strain>
    </source>
</reference>
<feature type="chain" id="PRO_0000145122" description="Translation initiation factor 1A">
    <location>
        <begin position="1"/>
        <end position="111"/>
    </location>
</feature>
<feature type="domain" description="S1-like" evidence="1">
    <location>
        <begin position="11"/>
        <end position="83"/>
    </location>
</feature>
<organism>
    <name type="scientific">Methanopyrus kandleri (strain AV19 / DSM 6324 / JCM 9639 / NBRC 100938)</name>
    <dbReference type="NCBI Taxonomy" id="190192"/>
    <lineage>
        <taxon>Archaea</taxon>
        <taxon>Methanobacteriati</taxon>
        <taxon>Methanobacteriota</taxon>
        <taxon>Methanomada group</taxon>
        <taxon>Methanopyri</taxon>
        <taxon>Methanopyrales</taxon>
        <taxon>Methanopyraceae</taxon>
        <taxon>Methanopyrus</taxon>
    </lineage>
</organism>
<accession>Q8TXZ3</accession>
<proteinExistence type="inferred from homology"/>
<dbReference type="EMBL" id="AE009439">
    <property type="protein sequence ID" value="AAM01730.1"/>
    <property type="molecule type" value="Genomic_DNA"/>
</dbReference>
<dbReference type="RefSeq" id="WP_011018885.1">
    <property type="nucleotide sequence ID" value="NC_003551.1"/>
</dbReference>
<dbReference type="SMR" id="Q8TXZ3"/>
<dbReference type="FunCoup" id="Q8TXZ3">
    <property type="interactions" value="126"/>
</dbReference>
<dbReference type="STRING" id="190192.MK0515"/>
<dbReference type="PaxDb" id="190192-MK0515"/>
<dbReference type="EnsemblBacteria" id="AAM01730">
    <property type="protein sequence ID" value="AAM01730"/>
    <property type="gene ID" value="MK0515"/>
</dbReference>
<dbReference type="GeneID" id="1476616"/>
<dbReference type="KEGG" id="mka:MK0515"/>
<dbReference type="PATRIC" id="fig|190192.8.peg.547"/>
<dbReference type="HOGENOM" id="CLU_109098_1_2_2"/>
<dbReference type="InParanoid" id="Q8TXZ3"/>
<dbReference type="OrthoDB" id="2586at2157"/>
<dbReference type="Proteomes" id="UP000001826">
    <property type="component" value="Chromosome"/>
</dbReference>
<dbReference type="GO" id="GO:0003723">
    <property type="term" value="F:RNA binding"/>
    <property type="evidence" value="ECO:0007669"/>
    <property type="project" value="InterPro"/>
</dbReference>
<dbReference type="GO" id="GO:0003743">
    <property type="term" value="F:translation initiation factor activity"/>
    <property type="evidence" value="ECO:0007669"/>
    <property type="project" value="UniProtKB-UniRule"/>
</dbReference>
<dbReference type="CDD" id="cd05793">
    <property type="entry name" value="S1_IF1A"/>
    <property type="match status" value="1"/>
</dbReference>
<dbReference type="Gene3D" id="2.40.50.140">
    <property type="entry name" value="Nucleic acid-binding proteins"/>
    <property type="match status" value="1"/>
</dbReference>
<dbReference type="HAMAP" id="MF_00216">
    <property type="entry name" value="aIF_1A"/>
    <property type="match status" value="1"/>
</dbReference>
<dbReference type="InterPro" id="IPR012340">
    <property type="entry name" value="NA-bd_OB-fold"/>
</dbReference>
<dbReference type="InterPro" id="IPR006196">
    <property type="entry name" value="RNA-binding_domain_S1_IF1"/>
</dbReference>
<dbReference type="InterPro" id="IPR001253">
    <property type="entry name" value="TIF_eIF-1A"/>
</dbReference>
<dbReference type="InterPro" id="IPR018104">
    <property type="entry name" value="TIF_eIF-1A_CS"/>
</dbReference>
<dbReference type="NCBIfam" id="TIGR00523">
    <property type="entry name" value="eIF-1A"/>
    <property type="match status" value="1"/>
</dbReference>
<dbReference type="NCBIfam" id="NF003082">
    <property type="entry name" value="PRK04012.1-1"/>
    <property type="match status" value="1"/>
</dbReference>
<dbReference type="NCBIfam" id="NF003084">
    <property type="entry name" value="PRK04012.1-3"/>
    <property type="match status" value="1"/>
</dbReference>
<dbReference type="NCBIfam" id="NF003085">
    <property type="entry name" value="PRK04012.1-5"/>
    <property type="match status" value="1"/>
</dbReference>
<dbReference type="PANTHER" id="PTHR21668">
    <property type="entry name" value="EIF-1A"/>
    <property type="match status" value="1"/>
</dbReference>
<dbReference type="Pfam" id="PF01176">
    <property type="entry name" value="eIF-1a"/>
    <property type="match status" value="1"/>
</dbReference>
<dbReference type="SMART" id="SM00652">
    <property type="entry name" value="eIF1a"/>
    <property type="match status" value="1"/>
</dbReference>
<dbReference type="SUPFAM" id="SSF50249">
    <property type="entry name" value="Nucleic acid-binding proteins"/>
    <property type="match status" value="1"/>
</dbReference>
<dbReference type="PROSITE" id="PS01262">
    <property type="entry name" value="IF1A"/>
    <property type="match status" value="1"/>
</dbReference>
<dbReference type="PROSITE" id="PS50832">
    <property type="entry name" value="S1_IF1_TYPE"/>
    <property type="match status" value="1"/>
</dbReference>